<accession>B0BVW3</accession>
<name>Y061_RICRO</name>
<proteinExistence type="inferred from homology"/>
<protein>
    <recommendedName>
        <fullName evidence="1">UPF0301 protein RrIowa_0061</fullName>
    </recommendedName>
</protein>
<feature type="chain" id="PRO_1000083516" description="UPF0301 protein RrIowa_0061">
    <location>
        <begin position="1"/>
        <end position="189"/>
    </location>
</feature>
<gene>
    <name type="ordered locus">RrIowa_0061</name>
</gene>
<sequence>MSDKIFHNLSGKTLVATPHVITKGIYHKSLIYMLSHTEEGAIGLIFNRLVNHIDLKSFFKIKNDEITTPVMVPIYLGGPVEHEKGFFLHSSDYNKNLLLDFHNDLAVSSNLEISEDIAFGKGPKNSLFIVGYTAWKPGQLEEELETNLWLVMDCNKEFIFADNPESKWHNALKHLGIDEIHFSSQIGNA</sequence>
<evidence type="ECO:0000255" key="1">
    <source>
        <dbReference type="HAMAP-Rule" id="MF_00758"/>
    </source>
</evidence>
<dbReference type="EMBL" id="CP000766">
    <property type="protein sequence ID" value="ABY71989.1"/>
    <property type="molecule type" value="Genomic_DNA"/>
</dbReference>
<dbReference type="RefSeq" id="WP_012150274.1">
    <property type="nucleotide sequence ID" value="NC_010263.3"/>
</dbReference>
<dbReference type="SMR" id="B0BVW3"/>
<dbReference type="KEGG" id="rrj:RrIowa_0061"/>
<dbReference type="eggNOG" id="COG1678">
    <property type="taxonomic scope" value="Bacteria"/>
</dbReference>
<dbReference type="HOGENOM" id="CLU_057596_1_0_5"/>
<dbReference type="Proteomes" id="UP000000796">
    <property type="component" value="Chromosome"/>
</dbReference>
<dbReference type="GO" id="GO:0005829">
    <property type="term" value="C:cytosol"/>
    <property type="evidence" value="ECO:0007669"/>
    <property type="project" value="TreeGrafter"/>
</dbReference>
<dbReference type="Gene3D" id="3.40.1740.10">
    <property type="entry name" value="VC0467-like"/>
    <property type="match status" value="1"/>
</dbReference>
<dbReference type="HAMAP" id="MF_00758">
    <property type="entry name" value="UPF0301"/>
    <property type="match status" value="1"/>
</dbReference>
<dbReference type="InterPro" id="IPR003774">
    <property type="entry name" value="AlgH-like"/>
</dbReference>
<dbReference type="NCBIfam" id="NF001268">
    <property type="entry name" value="PRK00228.1-4"/>
    <property type="match status" value="1"/>
</dbReference>
<dbReference type="PANTHER" id="PTHR30327">
    <property type="entry name" value="UNCHARACTERIZED PROTEIN YQGE"/>
    <property type="match status" value="1"/>
</dbReference>
<dbReference type="PANTHER" id="PTHR30327:SF1">
    <property type="entry name" value="UPF0301 PROTEIN YQGE"/>
    <property type="match status" value="1"/>
</dbReference>
<dbReference type="Pfam" id="PF02622">
    <property type="entry name" value="DUF179"/>
    <property type="match status" value="1"/>
</dbReference>
<dbReference type="SUPFAM" id="SSF143456">
    <property type="entry name" value="VC0467-like"/>
    <property type="match status" value="1"/>
</dbReference>
<organism>
    <name type="scientific">Rickettsia rickettsii (strain Iowa)</name>
    <dbReference type="NCBI Taxonomy" id="452659"/>
    <lineage>
        <taxon>Bacteria</taxon>
        <taxon>Pseudomonadati</taxon>
        <taxon>Pseudomonadota</taxon>
        <taxon>Alphaproteobacteria</taxon>
        <taxon>Rickettsiales</taxon>
        <taxon>Rickettsiaceae</taxon>
        <taxon>Rickettsieae</taxon>
        <taxon>Rickettsia</taxon>
        <taxon>spotted fever group</taxon>
    </lineage>
</organism>
<reference key="1">
    <citation type="journal article" date="2008" name="Infect. Immun.">
        <title>Genomic comparison of virulent Rickettsia rickettsii Sheila Smith and avirulent Rickettsia rickettsii Iowa.</title>
        <authorList>
            <person name="Ellison D.W."/>
            <person name="Clark T.R."/>
            <person name="Sturdevant D.E."/>
            <person name="Virtaneva K."/>
            <person name="Porcella S.F."/>
            <person name="Hackstadt T."/>
        </authorList>
    </citation>
    <scope>NUCLEOTIDE SEQUENCE [LARGE SCALE GENOMIC DNA]</scope>
    <source>
        <strain>Iowa</strain>
    </source>
</reference>
<comment type="similarity">
    <text evidence="1">Belongs to the UPF0301 (AlgH) family.</text>
</comment>